<sequence>MVLNSDLTTQDKERIINPIERPTITQDLSENVILTTVDDLYNWARLSSLWPLLFGTACCFIEFAALIGSRFDFDRFGLIPRSSPRQADLIITAGTITMKMAPQLVRLYEQMPEPKYVIAMGACTITGGMFSVDSPTAVRGVDKLIPVDVYLPGCPPRPEAIIDAIIKLRKKIANDSMQERSLIRQTHRFYSTTHNLKPVPDILTGKYMQSETRFNPPKELTEAIGLPVPPALLTSQTQKEEQKRG</sequence>
<accession>Q44240</accession>
<accession>Q9R6Y5</accession>
<proteinExistence type="inferred from homology"/>
<dbReference type="EC" id="7.1.1.-" evidence="1"/>
<dbReference type="EMBL" id="U31208">
    <property type="protein sequence ID" value="AAC44353.1"/>
    <property type="molecule type" value="Genomic_DNA"/>
</dbReference>
<dbReference type="EMBL" id="AJ012180">
    <property type="protein sequence ID" value="CAB45640.1"/>
    <property type="molecule type" value="Genomic_DNA"/>
</dbReference>
<dbReference type="EMBL" id="BA000019">
    <property type="protein sequence ID" value="BAB75540.1"/>
    <property type="molecule type" value="Genomic_DNA"/>
</dbReference>
<dbReference type="PIR" id="AB2286">
    <property type="entry name" value="AB2286"/>
</dbReference>
<dbReference type="PIR" id="S74216">
    <property type="entry name" value="S74216"/>
</dbReference>
<dbReference type="RefSeq" id="WP_010997982.1">
    <property type="nucleotide sequence ID" value="NZ_RSCN01000011.1"/>
</dbReference>
<dbReference type="SMR" id="Q44240"/>
<dbReference type="STRING" id="103690.gene:10495883"/>
<dbReference type="KEGG" id="ana:all3841"/>
<dbReference type="eggNOG" id="COG0377">
    <property type="taxonomic scope" value="Bacteria"/>
</dbReference>
<dbReference type="OrthoDB" id="9786737at2"/>
<dbReference type="Proteomes" id="UP000002483">
    <property type="component" value="Chromosome"/>
</dbReference>
<dbReference type="GO" id="GO:0031676">
    <property type="term" value="C:plasma membrane-derived thylakoid membrane"/>
    <property type="evidence" value="ECO:0007669"/>
    <property type="project" value="UniProtKB-SubCell"/>
</dbReference>
<dbReference type="GO" id="GO:0045271">
    <property type="term" value="C:respiratory chain complex I"/>
    <property type="evidence" value="ECO:0007669"/>
    <property type="project" value="TreeGrafter"/>
</dbReference>
<dbReference type="GO" id="GO:0051539">
    <property type="term" value="F:4 iron, 4 sulfur cluster binding"/>
    <property type="evidence" value="ECO:0007669"/>
    <property type="project" value="UniProtKB-KW"/>
</dbReference>
<dbReference type="GO" id="GO:0005506">
    <property type="term" value="F:iron ion binding"/>
    <property type="evidence" value="ECO:0007669"/>
    <property type="project" value="UniProtKB-UniRule"/>
</dbReference>
<dbReference type="GO" id="GO:0008137">
    <property type="term" value="F:NADH dehydrogenase (ubiquinone) activity"/>
    <property type="evidence" value="ECO:0007669"/>
    <property type="project" value="InterPro"/>
</dbReference>
<dbReference type="GO" id="GO:0048038">
    <property type="term" value="F:quinone binding"/>
    <property type="evidence" value="ECO:0007669"/>
    <property type="project" value="UniProtKB-KW"/>
</dbReference>
<dbReference type="GO" id="GO:0009060">
    <property type="term" value="P:aerobic respiration"/>
    <property type="evidence" value="ECO:0007669"/>
    <property type="project" value="TreeGrafter"/>
</dbReference>
<dbReference type="GO" id="GO:0015990">
    <property type="term" value="P:electron transport coupled proton transport"/>
    <property type="evidence" value="ECO:0007669"/>
    <property type="project" value="TreeGrafter"/>
</dbReference>
<dbReference type="GO" id="GO:0019684">
    <property type="term" value="P:photosynthesis, light reaction"/>
    <property type="evidence" value="ECO:0007669"/>
    <property type="project" value="UniProtKB-UniRule"/>
</dbReference>
<dbReference type="FunFam" id="3.40.50.12280:FF:000003">
    <property type="entry name" value="NAD(P)H-quinone oxidoreductase subunit K, chloroplastic"/>
    <property type="match status" value="1"/>
</dbReference>
<dbReference type="Gene3D" id="3.40.50.12280">
    <property type="match status" value="1"/>
</dbReference>
<dbReference type="HAMAP" id="MF_01356">
    <property type="entry name" value="NDH1_NuoB"/>
    <property type="match status" value="1"/>
</dbReference>
<dbReference type="InterPro" id="IPR006137">
    <property type="entry name" value="NADH_UbQ_OxRdtase-like_20kDa"/>
</dbReference>
<dbReference type="InterPro" id="IPR006138">
    <property type="entry name" value="NADH_UQ_OxRdtase_20Kd_su"/>
</dbReference>
<dbReference type="NCBIfam" id="TIGR01957">
    <property type="entry name" value="nuoB_fam"/>
    <property type="match status" value="1"/>
</dbReference>
<dbReference type="NCBIfam" id="NF005012">
    <property type="entry name" value="PRK06411.1"/>
    <property type="match status" value="1"/>
</dbReference>
<dbReference type="PANTHER" id="PTHR11995">
    <property type="entry name" value="NADH DEHYDROGENASE"/>
    <property type="match status" value="1"/>
</dbReference>
<dbReference type="PANTHER" id="PTHR11995:SF14">
    <property type="entry name" value="NADH DEHYDROGENASE [UBIQUINONE] IRON-SULFUR PROTEIN 7, MITOCHONDRIAL"/>
    <property type="match status" value="1"/>
</dbReference>
<dbReference type="Pfam" id="PF01058">
    <property type="entry name" value="Oxidored_q6"/>
    <property type="match status" value="1"/>
</dbReference>
<dbReference type="SUPFAM" id="SSF56770">
    <property type="entry name" value="HydA/Nqo6-like"/>
    <property type="match status" value="1"/>
</dbReference>
<dbReference type="PROSITE" id="PS01150">
    <property type="entry name" value="COMPLEX1_20K"/>
    <property type="match status" value="1"/>
</dbReference>
<feature type="chain" id="PRO_0000118758" description="NAD(P)H-quinone oxidoreductase subunit K">
    <location>
        <begin position="1"/>
        <end position="245"/>
    </location>
</feature>
<feature type="binding site" evidence="1">
    <location>
        <position position="58"/>
    </location>
    <ligand>
        <name>[4Fe-4S] cluster</name>
        <dbReference type="ChEBI" id="CHEBI:49883"/>
    </ligand>
</feature>
<feature type="binding site" evidence="1">
    <location>
        <position position="59"/>
    </location>
    <ligand>
        <name>[4Fe-4S] cluster</name>
        <dbReference type="ChEBI" id="CHEBI:49883"/>
    </ligand>
</feature>
<feature type="binding site" evidence="1">
    <location>
        <position position="123"/>
    </location>
    <ligand>
        <name>[4Fe-4S] cluster</name>
        <dbReference type="ChEBI" id="CHEBI:49883"/>
    </ligand>
</feature>
<feature type="binding site" evidence="1">
    <location>
        <position position="154"/>
    </location>
    <ligand>
        <name>[4Fe-4S] cluster</name>
        <dbReference type="ChEBI" id="CHEBI:49883"/>
    </ligand>
</feature>
<feature type="sequence conflict" description="In Ref. 1; AAC44353." evidence="2" ref="1">
    <original>K</original>
    <variation>I</variation>
    <location>
        <position position="12"/>
    </location>
</feature>
<feature type="sequence conflict" description="In Ref. 1; AAC44353." evidence="2" ref="1">
    <original>I</original>
    <variation>V</variation>
    <location>
        <position position="24"/>
    </location>
</feature>
<feature type="sequence conflict" description="In Ref. 1; AAC44353." evidence="2" ref="1">
    <original>L</original>
    <variation>M</variation>
    <location>
        <position position="104"/>
    </location>
</feature>
<feature type="sequence conflict" description="In Ref. 1; AAC44353." evidence="2" ref="1">
    <original>Q</original>
    <variation>K</variation>
    <location>
        <position position="110"/>
    </location>
</feature>
<feature type="sequence conflict" description="In Ref. 1; AAC44353." evidence="2" ref="1">
    <original>D</original>
    <variation>E</variation>
    <location>
        <position position="133"/>
    </location>
</feature>
<feature type="sequence conflict" description="In Ref. 1 and 2." evidence="2" ref="1 2">
    <original>I</original>
    <variation>M</variation>
    <location>
        <position position="165"/>
    </location>
</feature>
<feature type="sequence conflict" description="In Ref. 1 and 2." evidence="2" ref="1 2">
    <original>PD</original>
    <variation>AE</variation>
    <location>
        <begin position="200"/>
        <end position="201"/>
    </location>
</feature>
<protein>
    <recommendedName>
        <fullName evidence="1">NAD(P)H-quinone oxidoreductase subunit K</fullName>
        <ecNumber evidence="1">7.1.1.-</ecNumber>
    </recommendedName>
    <alternativeName>
        <fullName evidence="1">NAD(P)H dehydrogenase I subunit K</fullName>
    </alternativeName>
    <alternativeName>
        <fullName evidence="1">NDH-1 subunit K</fullName>
        <shortName evidence="1">NDH-K</shortName>
    </alternativeName>
</protein>
<organism>
    <name type="scientific">Nostoc sp. (strain PCC 7120 / SAG 25.82 / UTEX 2576)</name>
    <dbReference type="NCBI Taxonomy" id="103690"/>
    <lineage>
        <taxon>Bacteria</taxon>
        <taxon>Bacillati</taxon>
        <taxon>Cyanobacteriota</taxon>
        <taxon>Cyanophyceae</taxon>
        <taxon>Nostocales</taxon>
        <taxon>Nostocaceae</taxon>
        <taxon>Nostoc</taxon>
    </lineage>
</organism>
<reference key="1">
    <citation type="journal article" date="1996" name="Eur. J. Biochem.">
        <title>Cloning, analysis and inactivation of the ndhK gene encoding a subunit of NADH quinone oxidoreductase from Anabaena PCC 7120.</title>
        <authorList>
            <person name="Howitt C.A."/>
            <person name="Whelan J."/>
            <person name="Price G.D."/>
            <person name="Day D.A."/>
        </authorList>
    </citation>
    <scope>NUCLEOTIDE SEQUENCE [GENOMIC DNA]</scope>
</reference>
<reference key="2">
    <citation type="submission" date="1998-10" db="EMBL/GenBank/DDBJ databases">
        <title>Isolation and characterisation of the ndhCKJ-cluster of the cyanobacteria Anabaena sp. PCC 7120.</title>
        <authorList>
            <person name="Happe T."/>
            <person name="Schiefer W."/>
            <person name="Boehme H."/>
        </authorList>
    </citation>
    <scope>NUCLEOTIDE SEQUENCE [GENOMIC DNA]</scope>
</reference>
<reference key="3">
    <citation type="journal article" date="2001" name="DNA Res.">
        <title>Complete genomic sequence of the filamentous nitrogen-fixing cyanobacterium Anabaena sp. strain PCC 7120.</title>
        <authorList>
            <person name="Kaneko T."/>
            <person name="Nakamura Y."/>
            <person name="Wolk C.P."/>
            <person name="Kuritz T."/>
            <person name="Sasamoto S."/>
            <person name="Watanabe A."/>
            <person name="Iriguchi M."/>
            <person name="Ishikawa A."/>
            <person name="Kawashima K."/>
            <person name="Kimura T."/>
            <person name="Kishida Y."/>
            <person name="Kohara M."/>
            <person name="Matsumoto M."/>
            <person name="Matsuno A."/>
            <person name="Muraki A."/>
            <person name="Nakazaki N."/>
            <person name="Shimpo S."/>
            <person name="Sugimoto M."/>
            <person name="Takazawa M."/>
            <person name="Yamada M."/>
            <person name="Yasuda M."/>
            <person name="Tabata S."/>
        </authorList>
    </citation>
    <scope>NUCLEOTIDE SEQUENCE [LARGE SCALE GENOMIC DNA]</scope>
    <source>
        <strain>PCC 7120 / SAG 25.82 / UTEX 2576</strain>
    </source>
</reference>
<keyword id="KW-0004">4Fe-4S</keyword>
<keyword id="KW-0408">Iron</keyword>
<keyword id="KW-0411">Iron-sulfur</keyword>
<keyword id="KW-0472">Membrane</keyword>
<keyword id="KW-0479">Metal-binding</keyword>
<keyword id="KW-0520">NAD</keyword>
<keyword id="KW-0521">NADP</keyword>
<keyword id="KW-0618">Plastoquinone</keyword>
<keyword id="KW-0874">Quinone</keyword>
<keyword id="KW-1185">Reference proteome</keyword>
<keyword id="KW-0793">Thylakoid</keyword>
<keyword id="KW-1278">Translocase</keyword>
<keyword id="KW-0813">Transport</keyword>
<name>NDHK_NOSS1</name>
<comment type="function">
    <text evidence="1">NDH-1 shuttles electrons from an unknown electron donor, via FMN and iron-sulfur (Fe-S) centers, to quinones in the respiratory and/or the photosynthetic chain. The immediate electron acceptor for the enzyme in this species is believed to be plastoquinone. Couples the redox reaction to proton translocation, and thus conserves the redox energy in a proton gradient. Cyanobacterial NDH-1 also plays a role in inorganic carbon-concentration.</text>
</comment>
<comment type="catalytic activity">
    <reaction evidence="1">
        <text>a plastoquinone + NADH + (n+1) H(+)(in) = a plastoquinol + NAD(+) + n H(+)(out)</text>
        <dbReference type="Rhea" id="RHEA:42608"/>
        <dbReference type="Rhea" id="RHEA-COMP:9561"/>
        <dbReference type="Rhea" id="RHEA-COMP:9562"/>
        <dbReference type="ChEBI" id="CHEBI:15378"/>
        <dbReference type="ChEBI" id="CHEBI:17757"/>
        <dbReference type="ChEBI" id="CHEBI:57540"/>
        <dbReference type="ChEBI" id="CHEBI:57945"/>
        <dbReference type="ChEBI" id="CHEBI:62192"/>
    </reaction>
</comment>
<comment type="catalytic activity">
    <reaction evidence="1">
        <text>a plastoquinone + NADPH + (n+1) H(+)(in) = a plastoquinol + NADP(+) + n H(+)(out)</text>
        <dbReference type="Rhea" id="RHEA:42612"/>
        <dbReference type="Rhea" id="RHEA-COMP:9561"/>
        <dbReference type="Rhea" id="RHEA-COMP:9562"/>
        <dbReference type="ChEBI" id="CHEBI:15378"/>
        <dbReference type="ChEBI" id="CHEBI:17757"/>
        <dbReference type="ChEBI" id="CHEBI:57783"/>
        <dbReference type="ChEBI" id="CHEBI:58349"/>
        <dbReference type="ChEBI" id="CHEBI:62192"/>
    </reaction>
</comment>
<comment type="cofactor">
    <cofactor evidence="1">
        <name>[4Fe-4S] cluster</name>
        <dbReference type="ChEBI" id="CHEBI:49883"/>
    </cofactor>
    <text evidence="1">Binds 1 [4Fe-4S] cluster.</text>
</comment>
<comment type="subunit">
    <text evidence="1">NDH-1 can be composed of about 15 different subunits; different subcomplexes with different compositions have been identified which probably have different functions.</text>
</comment>
<comment type="subcellular location">
    <subcellularLocation>
        <location evidence="1">Cellular thylakoid membrane</location>
        <topology evidence="1">Peripheral membrane protein</topology>
        <orientation evidence="1">Cytoplasmic side</orientation>
    </subcellularLocation>
</comment>
<comment type="similarity">
    <text evidence="1">Belongs to the complex I 20 kDa subunit family.</text>
</comment>
<gene>
    <name evidence="1" type="primary">ndhK</name>
    <name type="ordered locus">all3841</name>
</gene>
<evidence type="ECO:0000255" key="1">
    <source>
        <dbReference type="HAMAP-Rule" id="MF_01356"/>
    </source>
</evidence>
<evidence type="ECO:0000305" key="2"/>